<accession>Q93GF1</accession>
<sequence>MGKIIGIDLGTTNSCVAVFEGNEPVVIANSEGKRTTPSVVGFVKDGERKVGDPAKRQAITNPKNTVYSIKRFMGETYEQSRKEAEAMPYTVINENGLPRVDIEGRKYTPQEISAMILQKMKKTAEDYLGQEVTDAVITVPAYFSDSQRQATKEAGQIAGLNVQRIVNEPTAAALAYGVDKGNKDMKIAVFDLGGGTFDISILEFGGGVFEVLSTNGDTHLGGDDFDQVIIKWLADGFKADEGIDLTKDPMAMQRLKEAAEKAKIELSSTTSTEINLPYISAEGGVPKHLVKTLTRAQFEQLAHDLIQACLVPCQNAIKDAKLSTSDIDEVILVGGSSRIPAVQTLVKNYFGKEPSKGVNPDEVVAVGAAIQGAILNKESGVGDIVLLDVTPLTLGIETMGGVMTKLIDANTTIPHKKSETFSTAVDNQTAVTIHVLQGERPMASQNKSIGQFNLEGIAPARRGVPQIEVTFDIDANGILNVSAKDKATGKEQKIRIEASSGLSKEEIERMKAEAEQNAAADKAEREKVDKLNQADSMIFTTENFLKDNGDKIPADQKPGIESALQQLKDAHKAADVAAIDAAINNLNSVMQAASAQMYQGAGGAQPDPNAGFQGAGGEQAQGGSTGDNVQDADFEEVK</sequence>
<proteinExistence type="inferred from homology"/>
<gene>
    <name type="primary">dnaK</name>
</gene>
<protein>
    <recommendedName>
        <fullName>Chaperone protein DnaK</fullName>
    </recommendedName>
    <alternativeName>
        <fullName>HSP70</fullName>
    </alternativeName>
    <alternativeName>
        <fullName>Heat shock 70 kDa protein</fullName>
    </alternativeName>
    <alternativeName>
        <fullName>Heat shock protein 70</fullName>
    </alternativeName>
</protein>
<keyword id="KW-0067">ATP-binding</keyword>
<keyword id="KW-0143">Chaperone</keyword>
<keyword id="KW-0547">Nucleotide-binding</keyword>
<keyword id="KW-0597">Phosphoprotein</keyword>
<keyword id="KW-0346">Stress response</keyword>
<feature type="chain" id="PRO_0000078510" description="Chaperone protein DnaK">
    <location>
        <begin position="1"/>
        <end position="638"/>
    </location>
</feature>
<feature type="region of interest" description="Disordered" evidence="2">
    <location>
        <begin position="597"/>
        <end position="638"/>
    </location>
</feature>
<feature type="compositionally biased region" description="Gly residues" evidence="2">
    <location>
        <begin position="613"/>
        <end position="625"/>
    </location>
</feature>
<feature type="modified residue" description="Phosphothreonine; by autocatalysis" evidence="1">
    <location>
        <position position="196"/>
    </location>
</feature>
<evidence type="ECO:0000250" key="1"/>
<evidence type="ECO:0000256" key="2">
    <source>
        <dbReference type="SAM" id="MobiDB-lite"/>
    </source>
</evidence>
<evidence type="ECO:0000305" key="3"/>
<name>DNAK_HOYLO</name>
<comment type="function">
    <text evidence="1">Acts as a chaperone.</text>
</comment>
<comment type="induction">
    <text evidence="1">By stress conditions e.g. heat shock (By similarity).</text>
</comment>
<comment type="similarity">
    <text evidence="3">Belongs to the heat shock protein 70 family.</text>
</comment>
<reference key="1">
    <citation type="journal article" date="2001" name="Curr. Microbiol.">
        <title>Cloning, characterization, and possible origin of the Prevotella loescheii dnaK homolog.</title>
        <authorList>
            <person name="Manch-Citron J.N."/>
            <person name="Shahani P.J."/>
            <person name="Schneider R."/>
        </authorList>
    </citation>
    <scope>NUCLEOTIDE SEQUENCE [GENOMIC DNA]</scope>
</reference>
<dbReference type="EMBL" id="AF252852">
    <property type="protein sequence ID" value="AAL08408.1"/>
    <property type="molecule type" value="Genomic_DNA"/>
</dbReference>
<dbReference type="SMR" id="Q93GF1"/>
<dbReference type="GO" id="GO:0005524">
    <property type="term" value="F:ATP binding"/>
    <property type="evidence" value="ECO:0007669"/>
    <property type="project" value="UniProtKB-UniRule"/>
</dbReference>
<dbReference type="GO" id="GO:0140662">
    <property type="term" value="F:ATP-dependent protein folding chaperone"/>
    <property type="evidence" value="ECO:0007669"/>
    <property type="project" value="InterPro"/>
</dbReference>
<dbReference type="GO" id="GO:0051082">
    <property type="term" value="F:unfolded protein binding"/>
    <property type="evidence" value="ECO:0007669"/>
    <property type="project" value="InterPro"/>
</dbReference>
<dbReference type="CDD" id="cd10234">
    <property type="entry name" value="ASKHA_NBD_HSP70_DnaK-like"/>
    <property type="match status" value="1"/>
</dbReference>
<dbReference type="FunFam" id="2.60.34.10:FF:000014">
    <property type="entry name" value="Chaperone protein DnaK HSP70"/>
    <property type="match status" value="1"/>
</dbReference>
<dbReference type="FunFam" id="1.20.1270.10:FF:000001">
    <property type="entry name" value="Molecular chaperone DnaK"/>
    <property type="match status" value="1"/>
</dbReference>
<dbReference type="FunFam" id="3.30.420.40:FF:000004">
    <property type="entry name" value="Molecular chaperone DnaK"/>
    <property type="match status" value="1"/>
</dbReference>
<dbReference type="FunFam" id="3.90.640.10:FF:000003">
    <property type="entry name" value="Molecular chaperone DnaK"/>
    <property type="match status" value="1"/>
</dbReference>
<dbReference type="Gene3D" id="1.20.1270.10">
    <property type="match status" value="1"/>
</dbReference>
<dbReference type="Gene3D" id="3.30.420.40">
    <property type="match status" value="2"/>
</dbReference>
<dbReference type="Gene3D" id="3.90.640.10">
    <property type="entry name" value="Actin, Chain A, domain 4"/>
    <property type="match status" value="1"/>
</dbReference>
<dbReference type="Gene3D" id="2.60.34.10">
    <property type="entry name" value="Substrate Binding Domain Of DNAk, Chain A, domain 1"/>
    <property type="match status" value="1"/>
</dbReference>
<dbReference type="HAMAP" id="MF_00332">
    <property type="entry name" value="DnaK"/>
    <property type="match status" value="1"/>
</dbReference>
<dbReference type="InterPro" id="IPR043129">
    <property type="entry name" value="ATPase_NBD"/>
</dbReference>
<dbReference type="InterPro" id="IPR012725">
    <property type="entry name" value="Chaperone_DnaK"/>
</dbReference>
<dbReference type="InterPro" id="IPR018181">
    <property type="entry name" value="Heat_shock_70_CS"/>
</dbReference>
<dbReference type="InterPro" id="IPR029048">
    <property type="entry name" value="HSP70_C_sf"/>
</dbReference>
<dbReference type="InterPro" id="IPR029047">
    <property type="entry name" value="HSP70_peptide-bd_sf"/>
</dbReference>
<dbReference type="InterPro" id="IPR013126">
    <property type="entry name" value="Hsp_70_fam"/>
</dbReference>
<dbReference type="NCBIfam" id="NF001413">
    <property type="entry name" value="PRK00290.1"/>
    <property type="match status" value="1"/>
</dbReference>
<dbReference type="NCBIfam" id="NF003520">
    <property type="entry name" value="PRK05183.1"/>
    <property type="match status" value="1"/>
</dbReference>
<dbReference type="NCBIfam" id="TIGR02350">
    <property type="entry name" value="prok_dnaK"/>
    <property type="match status" value="1"/>
</dbReference>
<dbReference type="PANTHER" id="PTHR19375">
    <property type="entry name" value="HEAT SHOCK PROTEIN 70KDA"/>
    <property type="match status" value="1"/>
</dbReference>
<dbReference type="Pfam" id="PF00012">
    <property type="entry name" value="HSP70"/>
    <property type="match status" value="1"/>
</dbReference>
<dbReference type="PRINTS" id="PR00301">
    <property type="entry name" value="HEATSHOCK70"/>
</dbReference>
<dbReference type="SUPFAM" id="SSF53067">
    <property type="entry name" value="Actin-like ATPase domain"/>
    <property type="match status" value="2"/>
</dbReference>
<dbReference type="SUPFAM" id="SSF100934">
    <property type="entry name" value="Heat shock protein 70kD (HSP70), C-terminal subdomain"/>
    <property type="match status" value="1"/>
</dbReference>
<dbReference type="SUPFAM" id="SSF100920">
    <property type="entry name" value="Heat shock protein 70kD (HSP70), peptide-binding domain"/>
    <property type="match status" value="1"/>
</dbReference>
<dbReference type="PROSITE" id="PS00297">
    <property type="entry name" value="HSP70_1"/>
    <property type="match status" value="1"/>
</dbReference>
<dbReference type="PROSITE" id="PS00329">
    <property type="entry name" value="HSP70_2"/>
    <property type="match status" value="1"/>
</dbReference>
<dbReference type="PROSITE" id="PS01036">
    <property type="entry name" value="HSP70_3"/>
    <property type="match status" value="1"/>
</dbReference>
<organism>
    <name type="scientific">Hoylesella loescheii</name>
    <name type="common">Prevotella loescheii</name>
    <dbReference type="NCBI Taxonomy" id="840"/>
    <lineage>
        <taxon>Bacteria</taxon>
        <taxon>Pseudomonadati</taxon>
        <taxon>Bacteroidota</taxon>
        <taxon>Bacteroidia</taxon>
        <taxon>Bacteroidales</taxon>
        <taxon>Prevotellaceae</taxon>
        <taxon>Hoylesella</taxon>
    </lineage>
</organism>